<gene>
    <name type="primary">NDK1</name>
    <name type="synonym">NDPK1</name>
    <name type="ordered locus">At4g09320</name>
    <name type="ORF">T30A10.80</name>
</gene>
<organism>
    <name type="scientific">Arabidopsis thaliana</name>
    <name type="common">Mouse-ear cress</name>
    <dbReference type="NCBI Taxonomy" id="3702"/>
    <lineage>
        <taxon>Eukaryota</taxon>
        <taxon>Viridiplantae</taxon>
        <taxon>Streptophyta</taxon>
        <taxon>Embryophyta</taxon>
        <taxon>Tracheophyta</taxon>
        <taxon>Spermatophyta</taxon>
        <taxon>Magnoliopsida</taxon>
        <taxon>eudicotyledons</taxon>
        <taxon>Gunneridae</taxon>
        <taxon>Pentapetalae</taxon>
        <taxon>rosids</taxon>
        <taxon>malvids</taxon>
        <taxon>Brassicales</taxon>
        <taxon>Brassicaceae</taxon>
        <taxon>Camelineae</taxon>
        <taxon>Arabidopsis</taxon>
    </lineage>
</organism>
<reference key="1">
    <citation type="submission" date="1992-11" db="EMBL/GenBank/DDBJ databases">
        <authorList>
            <person name="Quigley F.R."/>
        </authorList>
    </citation>
    <scope>NUCLEOTIDE SEQUENCE [GENOMIC DNA / MRNA]</scope>
    <source>
        <strain>cv. C24</strain>
        <strain>cv. Columbia</strain>
    </source>
</reference>
<reference key="2">
    <citation type="submission" date="1997-08" db="EMBL/GenBank/DDBJ databases">
        <title>Cloning and characterization of a phytochrome interacting protein.</title>
        <authorList>
            <person name="Yi H."/>
            <person name="Shin B."/>
            <person name="Lee J."/>
            <person name="Song P.-S."/>
            <person name="Choi G."/>
        </authorList>
    </citation>
    <scope>NUCLEOTIDE SEQUENCE [MRNA]</scope>
    <source>
        <strain>cv. Columbia</strain>
    </source>
</reference>
<reference key="3">
    <citation type="journal article" date="1999" name="Nature">
        <title>Sequence and analysis of chromosome 4 of the plant Arabidopsis thaliana.</title>
        <authorList>
            <person name="Mayer K.F.X."/>
            <person name="Schueller C."/>
            <person name="Wambutt R."/>
            <person name="Murphy G."/>
            <person name="Volckaert G."/>
            <person name="Pohl T."/>
            <person name="Duesterhoeft A."/>
            <person name="Stiekema W."/>
            <person name="Entian K.-D."/>
            <person name="Terryn N."/>
            <person name="Harris B."/>
            <person name="Ansorge W."/>
            <person name="Brandt P."/>
            <person name="Grivell L.A."/>
            <person name="Rieger M."/>
            <person name="Weichselgartner M."/>
            <person name="de Simone V."/>
            <person name="Obermaier B."/>
            <person name="Mache R."/>
            <person name="Mueller M."/>
            <person name="Kreis M."/>
            <person name="Delseny M."/>
            <person name="Puigdomenech P."/>
            <person name="Watson M."/>
            <person name="Schmidtheini T."/>
            <person name="Reichert B."/>
            <person name="Portetelle D."/>
            <person name="Perez-Alonso M."/>
            <person name="Boutry M."/>
            <person name="Bancroft I."/>
            <person name="Vos P."/>
            <person name="Hoheisel J."/>
            <person name="Zimmermann W."/>
            <person name="Wedler H."/>
            <person name="Ridley P."/>
            <person name="Langham S.-A."/>
            <person name="McCullagh B."/>
            <person name="Bilham L."/>
            <person name="Robben J."/>
            <person name="van der Schueren J."/>
            <person name="Grymonprez B."/>
            <person name="Chuang Y.-J."/>
            <person name="Vandenbussche F."/>
            <person name="Braeken M."/>
            <person name="Weltjens I."/>
            <person name="Voet M."/>
            <person name="Bastiaens I."/>
            <person name="Aert R."/>
            <person name="Defoor E."/>
            <person name="Weitzenegger T."/>
            <person name="Bothe G."/>
            <person name="Ramsperger U."/>
            <person name="Hilbert H."/>
            <person name="Braun M."/>
            <person name="Holzer E."/>
            <person name="Brandt A."/>
            <person name="Peters S."/>
            <person name="van Staveren M."/>
            <person name="Dirkse W."/>
            <person name="Mooijman P."/>
            <person name="Klein Lankhorst R."/>
            <person name="Rose M."/>
            <person name="Hauf J."/>
            <person name="Koetter P."/>
            <person name="Berneiser S."/>
            <person name="Hempel S."/>
            <person name="Feldpausch M."/>
            <person name="Lamberth S."/>
            <person name="Van den Daele H."/>
            <person name="De Keyser A."/>
            <person name="Buysshaert C."/>
            <person name="Gielen J."/>
            <person name="Villarroel R."/>
            <person name="De Clercq R."/>
            <person name="van Montagu M."/>
            <person name="Rogers J."/>
            <person name="Cronin A."/>
            <person name="Quail M.A."/>
            <person name="Bray-Allen S."/>
            <person name="Clark L."/>
            <person name="Doggett J."/>
            <person name="Hall S."/>
            <person name="Kay M."/>
            <person name="Lennard N."/>
            <person name="McLay K."/>
            <person name="Mayes R."/>
            <person name="Pettett A."/>
            <person name="Rajandream M.A."/>
            <person name="Lyne M."/>
            <person name="Benes V."/>
            <person name="Rechmann S."/>
            <person name="Borkova D."/>
            <person name="Bloecker H."/>
            <person name="Scharfe M."/>
            <person name="Grimm M."/>
            <person name="Loehnert T.-H."/>
            <person name="Dose S."/>
            <person name="de Haan M."/>
            <person name="Maarse A.C."/>
            <person name="Schaefer M."/>
            <person name="Mueller-Auer S."/>
            <person name="Gabel C."/>
            <person name="Fuchs M."/>
            <person name="Fartmann B."/>
            <person name="Granderath K."/>
            <person name="Dauner D."/>
            <person name="Herzl A."/>
            <person name="Neumann S."/>
            <person name="Argiriou A."/>
            <person name="Vitale D."/>
            <person name="Liguori R."/>
            <person name="Piravandi E."/>
            <person name="Massenet O."/>
            <person name="Quigley F."/>
            <person name="Clabauld G."/>
            <person name="Muendlein A."/>
            <person name="Felber R."/>
            <person name="Schnabl S."/>
            <person name="Hiller R."/>
            <person name="Schmidt W."/>
            <person name="Lecharny A."/>
            <person name="Aubourg S."/>
            <person name="Chefdor F."/>
            <person name="Cooke R."/>
            <person name="Berger C."/>
            <person name="Monfort A."/>
            <person name="Casacuberta E."/>
            <person name="Gibbons T."/>
            <person name="Weber N."/>
            <person name="Vandenbol M."/>
            <person name="Bargues M."/>
            <person name="Terol J."/>
            <person name="Torres A."/>
            <person name="Perez-Perez A."/>
            <person name="Purnelle B."/>
            <person name="Bent E."/>
            <person name="Johnson S."/>
            <person name="Tacon D."/>
            <person name="Jesse T."/>
            <person name="Heijnen L."/>
            <person name="Schwarz S."/>
            <person name="Scholler P."/>
            <person name="Heber S."/>
            <person name="Francs P."/>
            <person name="Bielke C."/>
            <person name="Frishman D."/>
            <person name="Haase D."/>
            <person name="Lemcke K."/>
            <person name="Mewes H.-W."/>
            <person name="Stocker S."/>
            <person name="Zaccaria P."/>
            <person name="Bevan M."/>
            <person name="Wilson R.K."/>
            <person name="de la Bastide M."/>
            <person name="Habermann K."/>
            <person name="Parnell L."/>
            <person name="Dedhia N."/>
            <person name="Gnoj L."/>
            <person name="Schutz K."/>
            <person name="Huang E."/>
            <person name="Spiegel L."/>
            <person name="Sekhon M."/>
            <person name="Murray J."/>
            <person name="Sheet P."/>
            <person name="Cordes M."/>
            <person name="Abu-Threideh J."/>
            <person name="Stoneking T."/>
            <person name="Kalicki J."/>
            <person name="Graves T."/>
            <person name="Harmon G."/>
            <person name="Edwards J."/>
            <person name="Latreille P."/>
            <person name="Courtney L."/>
            <person name="Cloud J."/>
            <person name="Abbott A."/>
            <person name="Scott K."/>
            <person name="Johnson D."/>
            <person name="Minx P."/>
            <person name="Bentley D."/>
            <person name="Fulton B."/>
            <person name="Miller N."/>
            <person name="Greco T."/>
            <person name="Kemp K."/>
            <person name="Kramer J."/>
            <person name="Fulton L."/>
            <person name="Mardis E."/>
            <person name="Dante M."/>
            <person name="Pepin K."/>
            <person name="Hillier L.W."/>
            <person name="Nelson J."/>
            <person name="Spieth J."/>
            <person name="Ryan E."/>
            <person name="Andrews S."/>
            <person name="Geisel C."/>
            <person name="Layman D."/>
            <person name="Du H."/>
            <person name="Ali J."/>
            <person name="Berghoff A."/>
            <person name="Jones K."/>
            <person name="Drone K."/>
            <person name="Cotton M."/>
            <person name="Joshu C."/>
            <person name="Antonoiu B."/>
            <person name="Zidanic M."/>
            <person name="Strong C."/>
            <person name="Sun H."/>
            <person name="Lamar B."/>
            <person name="Yordan C."/>
            <person name="Ma P."/>
            <person name="Zhong J."/>
            <person name="Preston R."/>
            <person name="Vil D."/>
            <person name="Shekher M."/>
            <person name="Matero A."/>
            <person name="Shah R."/>
            <person name="Swaby I.K."/>
            <person name="O'Shaughnessy A."/>
            <person name="Rodriguez M."/>
            <person name="Hoffman J."/>
            <person name="Till S."/>
            <person name="Granat S."/>
            <person name="Shohdy N."/>
            <person name="Hasegawa A."/>
            <person name="Hameed A."/>
            <person name="Lodhi M."/>
            <person name="Johnson A."/>
            <person name="Chen E."/>
            <person name="Marra M.A."/>
            <person name="Martienssen R."/>
            <person name="McCombie W.R."/>
        </authorList>
    </citation>
    <scope>NUCLEOTIDE SEQUENCE [LARGE SCALE GENOMIC DNA]</scope>
    <source>
        <strain>cv. Columbia</strain>
    </source>
</reference>
<reference key="4">
    <citation type="journal article" date="2017" name="Plant J.">
        <title>Araport11: a complete reannotation of the Arabidopsis thaliana reference genome.</title>
        <authorList>
            <person name="Cheng C.Y."/>
            <person name="Krishnakumar V."/>
            <person name="Chan A.P."/>
            <person name="Thibaud-Nissen F."/>
            <person name="Schobel S."/>
            <person name="Town C.D."/>
        </authorList>
    </citation>
    <scope>GENOME REANNOTATION</scope>
    <source>
        <strain>cv. Columbia</strain>
    </source>
</reference>
<reference key="5">
    <citation type="journal article" date="2003" name="Science">
        <title>Empirical analysis of transcriptional activity in the Arabidopsis genome.</title>
        <authorList>
            <person name="Yamada K."/>
            <person name="Lim J."/>
            <person name="Dale J.M."/>
            <person name="Chen H."/>
            <person name="Shinn P."/>
            <person name="Palm C.J."/>
            <person name="Southwick A.M."/>
            <person name="Wu H.C."/>
            <person name="Kim C.J."/>
            <person name="Nguyen M."/>
            <person name="Pham P.K."/>
            <person name="Cheuk R.F."/>
            <person name="Karlin-Newmann G."/>
            <person name="Liu S.X."/>
            <person name="Lam B."/>
            <person name="Sakano H."/>
            <person name="Wu T."/>
            <person name="Yu G."/>
            <person name="Miranda M."/>
            <person name="Quach H.L."/>
            <person name="Tripp M."/>
            <person name="Chang C.H."/>
            <person name="Lee J.M."/>
            <person name="Toriumi M.J."/>
            <person name="Chan M.M."/>
            <person name="Tang C.C."/>
            <person name="Onodera C.S."/>
            <person name="Deng J.M."/>
            <person name="Akiyama K."/>
            <person name="Ansari Y."/>
            <person name="Arakawa T."/>
            <person name="Banh J."/>
            <person name="Banno F."/>
            <person name="Bowser L."/>
            <person name="Brooks S.Y."/>
            <person name="Carninci P."/>
            <person name="Chao Q."/>
            <person name="Choy N."/>
            <person name="Enju A."/>
            <person name="Goldsmith A.D."/>
            <person name="Gurjal M."/>
            <person name="Hansen N.F."/>
            <person name="Hayashizaki Y."/>
            <person name="Johnson-Hopson C."/>
            <person name="Hsuan V.W."/>
            <person name="Iida K."/>
            <person name="Karnes M."/>
            <person name="Khan S."/>
            <person name="Koesema E."/>
            <person name="Ishida J."/>
            <person name="Jiang P.X."/>
            <person name="Jones T."/>
            <person name="Kawai J."/>
            <person name="Kamiya A."/>
            <person name="Meyers C."/>
            <person name="Nakajima M."/>
            <person name="Narusaka M."/>
            <person name="Seki M."/>
            <person name="Sakurai T."/>
            <person name="Satou M."/>
            <person name="Tamse R."/>
            <person name="Vaysberg M."/>
            <person name="Wallender E.K."/>
            <person name="Wong C."/>
            <person name="Yamamura Y."/>
            <person name="Yuan S."/>
            <person name="Shinozaki K."/>
            <person name="Davis R.W."/>
            <person name="Theologis A."/>
            <person name="Ecker J.R."/>
        </authorList>
    </citation>
    <scope>NUCLEOTIDE SEQUENCE [LARGE SCALE MRNA] OF 4-149</scope>
    <source>
        <strain>cv. Columbia</strain>
    </source>
</reference>
<reference key="6">
    <citation type="journal article" date="1993" name="Plant J.">
        <title>An inventory of 1152 expressed sequence tags obtained by partial sequencing of cDNAs from Arabidopsis thaliana.</title>
        <authorList>
            <person name="Hoefte H."/>
            <person name="Desprez T."/>
            <person name="Amselem J."/>
            <person name="Chiapello H."/>
            <person name="Rouze P."/>
            <person name="Caboche M."/>
            <person name="Moisan A."/>
            <person name="Jourjon M.-F."/>
            <person name="Charpenteau J.-L."/>
            <person name="Berthomieu P."/>
            <person name="Guerrier D."/>
            <person name="Giraudat J."/>
            <person name="Quigley F."/>
            <person name="Thomas F."/>
            <person name="Yu D.-Y."/>
            <person name="Mache R."/>
            <person name="Raynal M."/>
            <person name="Cooke R."/>
            <person name="Grellet F."/>
            <person name="Delseny M."/>
            <person name="Parmentier Y."/>
            <person name="de Marcillac G."/>
            <person name="Gigot C."/>
            <person name="Fleck J."/>
            <person name="Philipps G."/>
            <person name="Axelos M."/>
            <person name="Bardet C."/>
            <person name="Tremousaygue D."/>
            <person name="Lescure B."/>
        </authorList>
    </citation>
    <scope>NUCLEOTIDE SEQUENCE [LARGE SCALE MRNA] OF 5-81</scope>
    <source>
        <strain>cv. Columbia</strain>
        <tissue>Flower</tissue>
    </source>
</reference>
<reference key="7">
    <citation type="journal article" date="2003" name="Plant Cell Physiol.">
        <title>Arabidopsis NDK1 is a component of ROS signaling by interacting with three catalases.</title>
        <authorList>
            <person name="Fukamatsu Y."/>
            <person name="Yabe N."/>
            <person name="Hasunuma K."/>
        </authorList>
    </citation>
    <scope>FUNCTION</scope>
    <scope>INTERACTION WITH CAT1; CAT2 AND CAT3</scope>
</reference>
<reference key="8">
    <citation type="journal article" date="2009" name="Plant Physiol.">
        <title>In-depth proteome analysis of Arabidopsis leaf peroxisomes combined with in vivo subcellular targeting verification indicates novel metabolic and regulatory functions of peroxisomes.</title>
        <authorList>
            <person name="Reumann S."/>
            <person name="Quan S."/>
            <person name="Aung K."/>
            <person name="Yang P."/>
            <person name="Manandhar-Shrestha K."/>
            <person name="Holbrook D."/>
            <person name="Linka N."/>
            <person name="Switzenberg R."/>
            <person name="Wilkerson C.G."/>
            <person name="Weber A.P."/>
            <person name="Olsen L.J."/>
            <person name="Hu J."/>
        </authorList>
    </citation>
    <scope>SUBCELLULAR LOCATION</scope>
</reference>
<reference key="9">
    <citation type="journal article" date="2012" name="Mol. Cell. Proteomics">
        <title>Comparative large-scale characterisation of plant vs. mammal proteins reveals similar and idiosyncratic N-alpha acetylation features.</title>
        <authorList>
            <person name="Bienvenut W.V."/>
            <person name="Sumpton D."/>
            <person name="Martinez A."/>
            <person name="Lilla S."/>
            <person name="Espagne C."/>
            <person name="Meinnel T."/>
            <person name="Giglione C."/>
        </authorList>
    </citation>
    <scope>ACETYLATION [LARGE SCALE ANALYSIS] AT MET-1</scope>
    <scope>IDENTIFICATION BY MASS SPECTROMETRY [LARGE SCALE ANALYSIS]</scope>
</reference>
<reference key="10">
    <citation type="journal article" date="2004" name="J. Mol. Biol.">
        <title>Structural analysis of Arabidopsis thaliana nucleoside diphosphate kinase-2 for phytochrome-mediated light signaling.</title>
        <authorList>
            <person name="Im Y.J."/>
            <person name="Kim J.I."/>
            <person name="Shen Y."/>
            <person name="Na Y."/>
            <person name="Han Y.J."/>
            <person name="Kim S.H."/>
            <person name="Song P.S."/>
            <person name="Eom S.H."/>
        </authorList>
    </citation>
    <scope>X-RAY CRYSTALLOGRAPHY (2.40 ANGSTROMS)</scope>
</reference>
<name>NDK1_ARATH</name>
<dbReference type="EC" id="2.7.4.6"/>
<dbReference type="EMBL" id="X69373">
    <property type="protein sequence ID" value="CAA49170.1"/>
    <property type="molecule type" value="mRNA"/>
</dbReference>
<dbReference type="EMBL" id="X69376">
    <property type="protein sequence ID" value="CAA49173.1"/>
    <property type="status" value="ALT_SEQ"/>
    <property type="molecule type" value="Genomic_DNA"/>
</dbReference>
<dbReference type="EMBL" id="AF017641">
    <property type="protein sequence ID" value="AAC17844.1"/>
    <property type="molecule type" value="mRNA"/>
</dbReference>
<dbReference type="EMBL" id="AL117386">
    <property type="protein sequence ID" value="CAB55695.1"/>
    <property type="molecule type" value="Genomic_DNA"/>
</dbReference>
<dbReference type="EMBL" id="AL161514">
    <property type="protein sequence ID" value="CAB78055.1"/>
    <property type="molecule type" value="Genomic_DNA"/>
</dbReference>
<dbReference type="EMBL" id="CP002687">
    <property type="protein sequence ID" value="AEE82742.2"/>
    <property type="molecule type" value="Genomic_DNA"/>
</dbReference>
<dbReference type="EMBL" id="AF370529">
    <property type="protein sequence ID" value="AAK48956.1"/>
    <property type="status" value="ALT_INIT"/>
    <property type="molecule type" value="mRNA"/>
</dbReference>
<dbReference type="EMBL" id="AY072518">
    <property type="protein sequence ID" value="AAL66933.1"/>
    <property type="molecule type" value="mRNA"/>
</dbReference>
<dbReference type="EMBL" id="Z18791">
    <property type="protein sequence ID" value="CAA79265.1"/>
    <property type="molecule type" value="mRNA"/>
</dbReference>
<dbReference type="PIR" id="S31444">
    <property type="entry name" value="S31444"/>
</dbReference>
<dbReference type="PIR" id="S31446">
    <property type="entry name" value="S31446"/>
</dbReference>
<dbReference type="PIR" id="T17131">
    <property type="entry name" value="T17131"/>
</dbReference>
<dbReference type="RefSeq" id="NP_567346.2">
    <property type="nucleotide sequence ID" value="NM_117000.3"/>
</dbReference>
<dbReference type="PDB" id="1U8W">
    <property type="method" value="X-ray"/>
    <property type="resolution" value="2.40 A"/>
    <property type="chains" value="A/B/C/D/E/F=1-149"/>
</dbReference>
<dbReference type="PDBsum" id="1U8W"/>
<dbReference type="SMR" id="P39207"/>
<dbReference type="BioGRID" id="11814">
    <property type="interactions" value="19"/>
</dbReference>
<dbReference type="FunCoup" id="P39207">
    <property type="interactions" value="1633"/>
</dbReference>
<dbReference type="IntAct" id="P39207">
    <property type="interactions" value="4"/>
</dbReference>
<dbReference type="STRING" id="3702.P39207"/>
<dbReference type="iPTMnet" id="P39207"/>
<dbReference type="PaxDb" id="3702-AT4G09320.1"/>
<dbReference type="ProMEX" id="P39207"/>
<dbReference type="ProteomicsDB" id="251129"/>
<dbReference type="EnsemblPlants" id="AT4G09320.1">
    <property type="protein sequence ID" value="AT4G09320.1"/>
    <property type="gene ID" value="AT4G09320"/>
</dbReference>
<dbReference type="GeneID" id="826515"/>
<dbReference type="Gramene" id="AT4G09320.1">
    <property type="protein sequence ID" value="AT4G09320.1"/>
    <property type="gene ID" value="AT4G09320"/>
</dbReference>
<dbReference type="KEGG" id="ath:AT4G09320"/>
<dbReference type="Araport" id="AT4G09320"/>
<dbReference type="TAIR" id="AT4G09320">
    <property type="gene designation" value="NDPK1"/>
</dbReference>
<dbReference type="eggNOG" id="KOG0888">
    <property type="taxonomic scope" value="Eukaryota"/>
</dbReference>
<dbReference type="HOGENOM" id="CLU_060216_6_3_1"/>
<dbReference type="InParanoid" id="P39207"/>
<dbReference type="OMA" id="FCVQVGK"/>
<dbReference type="OrthoDB" id="2162449at2759"/>
<dbReference type="PhylomeDB" id="P39207"/>
<dbReference type="BioCyc" id="ARA:AT4G09320-MONOMER"/>
<dbReference type="BioCyc" id="MetaCyc:AT4G09320-MONOMER"/>
<dbReference type="BRENDA" id="2.7.4.6">
    <property type="organism ID" value="399"/>
</dbReference>
<dbReference type="CD-CODE" id="4299E36E">
    <property type="entry name" value="Nucleolus"/>
</dbReference>
<dbReference type="EvolutionaryTrace" id="P39207"/>
<dbReference type="PRO" id="PR:P39207"/>
<dbReference type="Proteomes" id="UP000006548">
    <property type="component" value="Chromosome 4"/>
</dbReference>
<dbReference type="ExpressionAtlas" id="P39207">
    <property type="expression patterns" value="baseline and differential"/>
</dbReference>
<dbReference type="GO" id="GO:0005634">
    <property type="term" value="C:nucleus"/>
    <property type="evidence" value="ECO:0007669"/>
    <property type="project" value="UniProtKB-SubCell"/>
</dbReference>
<dbReference type="GO" id="GO:0005777">
    <property type="term" value="C:peroxisome"/>
    <property type="evidence" value="ECO:0007669"/>
    <property type="project" value="UniProtKB-SubCell"/>
</dbReference>
<dbReference type="GO" id="GO:0005524">
    <property type="term" value="F:ATP binding"/>
    <property type="evidence" value="ECO:0007669"/>
    <property type="project" value="UniProtKB-KW"/>
</dbReference>
<dbReference type="GO" id="GO:0046872">
    <property type="term" value="F:metal ion binding"/>
    <property type="evidence" value="ECO:0007669"/>
    <property type="project" value="UniProtKB-KW"/>
</dbReference>
<dbReference type="GO" id="GO:0004550">
    <property type="term" value="F:nucleoside diphosphate kinase activity"/>
    <property type="evidence" value="ECO:0000314"/>
    <property type="project" value="UniProtKB"/>
</dbReference>
<dbReference type="GO" id="GO:0070301">
    <property type="term" value="P:cellular response to hydrogen peroxide"/>
    <property type="evidence" value="ECO:0000314"/>
    <property type="project" value="UniProtKB"/>
</dbReference>
<dbReference type="GO" id="GO:0006241">
    <property type="term" value="P:CTP biosynthetic process"/>
    <property type="evidence" value="ECO:0007669"/>
    <property type="project" value="InterPro"/>
</dbReference>
<dbReference type="GO" id="GO:0006183">
    <property type="term" value="P:GTP biosynthetic process"/>
    <property type="evidence" value="ECO:0007669"/>
    <property type="project" value="InterPro"/>
</dbReference>
<dbReference type="GO" id="GO:0006228">
    <property type="term" value="P:UTP biosynthetic process"/>
    <property type="evidence" value="ECO:0007669"/>
    <property type="project" value="InterPro"/>
</dbReference>
<dbReference type="CDD" id="cd04413">
    <property type="entry name" value="NDPk_I"/>
    <property type="match status" value="1"/>
</dbReference>
<dbReference type="FunFam" id="3.30.70.141:FF:000002">
    <property type="entry name" value="Nucleoside diphosphate kinase"/>
    <property type="match status" value="1"/>
</dbReference>
<dbReference type="Gene3D" id="3.30.70.141">
    <property type="entry name" value="Nucleoside diphosphate kinase-like domain"/>
    <property type="match status" value="1"/>
</dbReference>
<dbReference type="HAMAP" id="MF_00451">
    <property type="entry name" value="NDP_kinase"/>
    <property type="match status" value="1"/>
</dbReference>
<dbReference type="InterPro" id="IPR034907">
    <property type="entry name" value="NDK-like_dom"/>
</dbReference>
<dbReference type="InterPro" id="IPR036850">
    <property type="entry name" value="NDK-like_dom_sf"/>
</dbReference>
<dbReference type="InterPro" id="IPR001564">
    <property type="entry name" value="Nucleoside_diP_kinase"/>
</dbReference>
<dbReference type="InterPro" id="IPR023005">
    <property type="entry name" value="Nucleoside_diP_kinase_AS"/>
</dbReference>
<dbReference type="NCBIfam" id="NF001908">
    <property type="entry name" value="PRK00668.1"/>
    <property type="match status" value="1"/>
</dbReference>
<dbReference type="PANTHER" id="PTHR11349">
    <property type="entry name" value="NUCLEOSIDE DIPHOSPHATE KINASE"/>
    <property type="match status" value="1"/>
</dbReference>
<dbReference type="Pfam" id="PF00334">
    <property type="entry name" value="NDK"/>
    <property type="match status" value="1"/>
</dbReference>
<dbReference type="PRINTS" id="PR01243">
    <property type="entry name" value="NUCDPKINASE"/>
</dbReference>
<dbReference type="SMART" id="SM00562">
    <property type="entry name" value="NDK"/>
    <property type="match status" value="1"/>
</dbReference>
<dbReference type="SUPFAM" id="SSF54919">
    <property type="entry name" value="Nucleoside diphosphate kinase, NDK"/>
    <property type="match status" value="1"/>
</dbReference>
<dbReference type="PROSITE" id="PS00469">
    <property type="entry name" value="NDPK"/>
    <property type="match status" value="1"/>
</dbReference>
<dbReference type="PROSITE" id="PS51374">
    <property type="entry name" value="NDPK_LIKE"/>
    <property type="match status" value="1"/>
</dbReference>
<proteinExistence type="evidence at protein level"/>
<comment type="function">
    <text evidence="2">Major role in the synthesis of nucleoside triphosphates other than ATP. The ATP gamma phosphate is transferred to the NDP beta phosphate via a ping-pong mechanism, using a phosphorylated active-site intermediate. Plays a role in response to reactive oxygen species (ROS) stress.</text>
</comment>
<comment type="catalytic activity">
    <reaction>
        <text>a 2'-deoxyribonucleoside 5'-diphosphate + ATP = a 2'-deoxyribonucleoside 5'-triphosphate + ADP</text>
        <dbReference type="Rhea" id="RHEA:44640"/>
        <dbReference type="ChEBI" id="CHEBI:30616"/>
        <dbReference type="ChEBI" id="CHEBI:61560"/>
        <dbReference type="ChEBI" id="CHEBI:73316"/>
        <dbReference type="ChEBI" id="CHEBI:456216"/>
        <dbReference type="EC" id="2.7.4.6"/>
    </reaction>
</comment>
<comment type="catalytic activity">
    <reaction>
        <text>a ribonucleoside 5'-diphosphate + ATP = a ribonucleoside 5'-triphosphate + ADP</text>
        <dbReference type="Rhea" id="RHEA:18113"/>
        <dbReference type="ChEBI" id="CHEBI:30616"/>
        <dbReference type="ChEBI" id="CHEBI:57930"/>
        <dbReference type="ChEBI" id="CHEBI:61557"/>
        <dbReference type="ChEBI" id="CHEBI:456216"/>
        <dbReference type="EC" id="2.7.4.6"/>
    </reaction>
</comment>
<comment type="cofactor">
    <cofactor evidence="1">
        <name>Mg(2+)</name>
        <dbReference type="ChEBI" id="CHEBI:18420"/>
    </cofactor>
</comment>
<comment type="subunit">
    <text evidence="2">Interacts with CAT1, CAT2 and CAT3.</text>
</comment>
<comment type="subcellular location">
    <subcellularLocation>
        <location evidence="3">Peroxisome</location>
    </subcellularLocation>
    <subcellularLocation>
        <location evidence="3">Nucleus</location>
    </subcellularLocation>
    <subcellularLocation>
        <location evidence="3">Cytoplasm</location>
    </subcellularLocation>
</comment>
<comment type="miscellaneous">
    <text evidence="5">Plants over-expressing NDK1 are more tolerant to paraquat and have increased ability to eliminate exogenous H(2)O(2).</text>
</comment>
<comment type="similarity">
    <text evidence="4">Belongs to the NDK family.</text>
</comment>
<comment type="sequence caution" evidence="4">
    <conflict type="erroneous initiation">
        <sequence resource="EMBL-CDS" id="AAK48956"/>
    </conflict>
    <text>Truncated N-terminus.</text>
</comment>
<comment type="sequence caution" evidence="4">
    <conflict type="erroneous gene model prediction">
        <sequence resource="EMBL-CDS" id="CAA49173"/>
    </conflict>
</comment>
<feature type="chain" id="PRO_0000137134" description="Nucleoside diphosphate kinase 1">
    <location>
        <begin position="1"/>
        <end position="149"/>
    </location>
</feature>
<feature type="active site" description="Pros-phosphohistidine intermediate" evidence="1">
    <location>
        <position position="115"/>
    </location>
</feature>
<feature type="binding site" evidence="1">
    <location>
        <position position="9"/>
    </location>
    <ligand>
        <name>ATP</name>
        <dbReference type="ChEBI" id="CHEBI:30616"/>
    </ligand>
</feature>
<feature type="binding site" evidence="1">
    <location>
        <position position="57"/>
    </location>
    <ligand>
        <name>ATP</name>
        <dbReference type="ChEBI" id="CHEBI:30616"/>
    </ligand>
</feature>
<feature type="binding site" evidence="1">
    <location>
        <position position="85"/>
    </location>
    <ligand>
        <name>ATP</name>
        <dbReference type="ChEBI" id="CHEBI:30616"/>
    </ligand>
</feature>
<feature type="binding site" evidence="1">
    <location>
        <position position="91"/>
    </location>
    <ligand>
        <name>ATP</name>
        <dbReference type="ChEBI" id="CHEBI:30616"/>
    </ligand>
</feature>
<feature type="binding site" evidence="1">
    <location>
        <position position="102"/>
    </location>
    <ligand>
        <name>ATP</name>
        <dbReference type="ChEBI" id="CHEBI:30616"/>
    </ligand>
</feature>
<feature type="binding site" evidence="1">
    <location>
        <position position="112"/>
    </location>
    <ligand>
        <name>ATP</name>
        <dbReference type="ChEBI" id="CHEBI:30616"/>
    </ligand>
</feature>
<feature type="modified residue" description="N-acetylmethionine" evidence="6">
    <location>
        <position position="1"/>
    </location>
</feature>
<feature type="sequence conflict" description="In Ref. 6; CAA79265." evidence="4" ref="6">
    <original>FT</original>
    <variation>LH</variation>
    <location>
        <begin position="30"/>
        <end position="31"/>
    </location>
</feature>
<feature type="strand" evidence="7">
    <location>
        <begin position="3"/>
        <end position="8"/>
    </location>
</feature>
<feature type="helix" evidence="7">
    <location>
        <begin position="10"/>
        <end position="14"/>
    </location>
</feature>
<feature type="helix" evidence="7">
    <location>
        <begin position="18"/>
        <end position="28"/>
    </location>
</feature>
<feature type="strand" evidence="7">
    <location>
        <begin position="31"/>
        <end position="38"/>
    </location>
</feature>
<feature type="helix" evidence="7">
    <location>
        <begin position="42"/>
        <end position="48"/>
    </location>
</feature>
<feature type="strand" evidence="7">
    <location>
        <begin position="53"/>
        <end position="55"/>
    </location>
</feature>
<feature type="helix" evidence="7">
    <location>
        <begin position="58"/>
        <end position="65"/>
    </location>
</feature>
<feature type="strand" evidence="7">
    <location>
        <begin position="70"/>
        <end position="77"/>
    </location>
</feature>
<feature type="helix" evidence="7">
    <location>
        <begin position="80"/>
        <end position="88"/>
    </location>
</feature>
<feature type="turn" evidence="7">
    <location>
        <begin position="93"/>
        <end position="95"/>
    </location>
</feature>
<feature type="helix" evidence="7">
    <location>
        <begin position="101"/>
        <end position="105"/>
    </location>
</feature>
<feature type="strand" evidence="7">
    <location>
        <begin position="113"/>
        <end position="116"/>
    </location>
</feature>
<feature type="helix" evidence="7">
    <location>
        <begin position="120"/>
        <end position="130"/>
    </location>
</feature>
<feature type="helix" evidence="7">
    <location>
        <begin position="143"/>
        <end position="145"/>
    </location>
</feature>
<protein>
    <recommendedName>
        <fullName>Nucleoside diphosphate kinase 1</fullName>
        <ecNumber>2.7.4.6</ecNumber>
    </recommendedName>
    <alternativeName>
        <fullName>Nucleoside diphosphate kinase I</fullName>
        <shortName>NDK I</shortName>
        <shortName>NDP kinase I</shortName>
        <shortName>NDPK I</shortName>
    </alternativeName>
</protein>
<sequence>MEQTFIMIKPDGVQRGLIGEVICRFEKKGFTLKGLKLISVERSFAEKHYEDLSSKSFFSGLVDYIVSGPVVAMIWEGKNVVLTGRKIIGATNPAASEPGTIRGDFAIDIGRNVIHGSDSVESARKEIALWFPDGPVNWQSSVHPWVYET</sequence>
<keyword id="KW-0002">3D-structure</keyword>
<keyword id="KW-0007">Acetylation</keyword>
<keyword id="KW-0067">ATP-binding</keyword>
<keyword id="KW-0963">Cytoplasm</keyword>
<keyword id="KW-0418">Kinase</keyword>
<keyword id="KW-0460">Magnesium</keyword>
<keyword id="KW-0479">Metal-binding</keyword>
<keyword id="KW-0546">Nucleotide metabolism</keyword>
<keyword id="KW-0547">Nucleotide-binding</keyword>
<keyword id="KW-0539">Nucleus</keyword>
<keyword id="KW-0576">Peroxisome</keyword>
<keyword id="KW-1185">Reference proteome</keyword>
<keyword id="KW-0346">Stress response</keyword>
<keyword id="KW-0808">Transferase</keyword>
<evidence type="ECO:0000250" key="1"/>
<evidence type="ECO:0000269" key="2">
    <source>
    </source>
</evidence>
<evidence type="ECO:0000269" key="3">
    <source>
    </source>
</evidence>
<evidence type="ECO:0000305" key="4"/>
<evidence type="ECO:0000305" key="5">
    <source>
    </source>
</evidence>
<evidence type="ECO:0007744" key="6">
    <source>
    </source>
</evidence>
<evidence type="ECO:0007829" key="7">
    <source>
        <dbReference type="PDB" id="1U8W"/>
    </source>
</evidence>
<accession>P39207</accession>
<accession>F4JJZ8</accession>
<accession>Q41989</accession>
<accession>Q94JY5</accession>